<protein>
    <recommendedName>
        <fullName evidence="1">Galactokinase</fullName>
        <ecNumber evidence="1">2.7.1.6</ecNumber>
    </recommendedName>
    <alternativeName>
        <fullName evidence="1">Galactose kinase</fullName>
    </alternativeName>
</protein>
<sequence>MSLKEKTQSLFANAFGYPATHTIQAPGRVNLIGEHTDYNDGFVLPCAIDYQTVISCAPRDDRKVRVMAADYENQLDEFSLNAPIVAHENYQWANYVRGVVKHLQLRNNSFGGVDMVISGNVPQGAGLSSSASLEVAVGTVLQQLYHLPLDGAQIALNGQEAENQFVGCNCGIMDQLISALGKKDHALLIDCRSLGTKAVSMPKGVAVVIINSNFKRTLVGSEYNTRREQCETGARFFQQPALRDVTIEEFNAVAHELDPIVAKRVRHILTENARTVEAASALEQGDLKRMGELMAESHASMRDDFEITVPQIDTLAEIVKAVIGDKGGVRMTGGGFGGCIVALIPEELVPAVQQAVAEQYEAKTGIKETFYVCKPSQGAGQC</sequence>
<organism>
    <name type="scientific">Shigella boydii serotype 4 (strain Sb227)</name>
    <dbReference type="NCBI Taxonomy" id="300268"/>
    <lineage>
        <taxon>Bacteria</taxon>
        <taxon>Pseudomonadati</taxon>
        <taxon>Pseudomonadota</taxon>
        <taxon>Gammaproteobacteria</taxon>
        <taxon>Enterobacterales</taxon>
        <taxon>Enterobacteriaceae</taxon>
        <taxon>Shigella</taxon>
    </lineage>
</organism>
<gene>
    <name evidence="1" type="primary">galK</name>
    <name type="ordered locus">SBO_0612</name>
</gene>
<proteinExistence type="inferred from homology"/>
<evidence type="ECO:0000255" key="1">
    <source>
        <dbReference type="HAMAP-Rule" id="MF_00246"/>
    </source>
</evidence>
<keyword id="KW-0067">ATP-binding</keyword>
<keyword id="KW-0119">Carbohydrate metabolism</keyword>
<keyword id="KW-0963">Cytoplasm</keyword>
<keyword id="KW-0299">Galactose metabolism</keyword>
<keyword id="KW-0418">Kinase</keyword>
<keyword id="KW-0460">Magnesium</keyword>
<keyword id="KW-0479">Metal-binding</keyword>
<keyword id="KW-0547">Nucleotide-binding</keyword>
<keyword id="KW-0808">Transferase</keyword>
<reference key="1">
    <citation type="journal article" date="2005" name="Nucleic Acids Res.">
        <title>Genome dynamics and diversity of Shigella species, the etiologic agents of bacillary dysentery.</title>
        <authorList>
            <person name="Yang F."/>
            <person name="Yang J."/>
            <person name="Zhang X."/>
            <person name="Chen L."/>
            <person name="Jiang Y."/>
            <person name="Yan Y."/>
            <person name="Tang X."/>
            <person name="Wang J."/>
            <person name="Xiong Z."/>
            <person name="Dong J."/>
            <person name="Xue Y."/>
            <person name="Zhu Y."/>
            <person name="Xu X."/>
            <person name="Sun L."/>
            <person name="Chen S."/>
            <person name="Nie H."/>
            <person name="Peng J."/>
            <person name="Xu J."/>
            <person name="Wang Y."/>
            <person name="Yuan Z."/>
            <person name="Wen Y."/>
            <person name="Yao Z."/>
            <person name="Shen Y."/>
            <person name="Qiang B."/>
            <person name="Hou Y."/>
            <person name="Yu J."/>
            <person name="Jin Q."/>
        </authorList>
    </citation>
    <scope>NUCLEOTIDE SEQUENCE [LARGE SCALE GENOMIC DNA]</scope>
    <source>
        <strain>Sb227</strain>
    </source>
</reference>
<feature type="chain" id="PRO_1000005761" description="Galactokinase">
    <location>
        <begin position="1"/>
        <end position="382"/>
    </location>
</feature>
<feature type="active site" description="Proton acceptor" evidence="1">
    <location>
        <position position="174"/>
    </location>
</feature>
<feature type="binding site" evidence="1">
    <location>
        <begin position="34"/>
        <end position="37"/>
    </location>
    <ligand>
        <name>substrate</name>
    </ligand>
</feature>
<feature type="binding site" evidence="1">
    <location>
        <begin position="124"/>
        <end position="130"/>
    </location>
    <ligand>
        <name>ATP</name>
        <dbReference type="ChEBI" id="CHEBI:30616"/>
    </ligand>
</feature>
<feature type="binding site" evidence="1">
    <location>
        <position position="130"/>
    </location>
    <ligand>
        <name>Mg(2+)</name>
        <dbReference type="ChEBI" id="CHEBI:18420"/>
    </ligand>
</feature>
<feature type="binding site" evidence="1">
    <location>
        <position position="162"/>
    </location>
    <ligand>
        <name>Mg(2+)</name>
        <dbReference type="ChEBI" id="CHEBI:18420"/>
    </ligand>
</feature>
<feature type="binding site" evidence="1">
    <location>
        <position position="223"/>
    </location>
    <ligand>
        <name>substrate</name>
    </ligand>
</feature>
<feature type="site" description="Transition state stabilizer" evidence="1">
    <location>
        <position position="28"/>
    </location>
</feature>
<accession>Q324G2</accession>
<comment type="function">
    <text evidence="1">Catalyzes the transfer of the gamma-phosphate of ATP to D-galactose to form alpha-D-galactose-1-phosphate (Gal-1-P).</text>
</comment>
<comment type="catalytic activity">
    <reaction evidence="1">
        <text>alpha-D-galactose + ATP = alpha-D-galactose 1-phosphate + ADP + H(+)</text>
        <dbReference type="Rhea" id="RHEA:13553"/>
        <dbReference type="ChEBI" id="CHEBI:15378"/>
        <dbReference type="ChEBI" id="CHEBI:28061"/>
        <dbReference type="ChEBI" id="CHEBI:30616"/>
        <dbReference type="ChEBI" id="CHEBI:58336"/>
        <dbReference type="ChEBI" id="CHEBI:456216"/>
        <dbReference type="EC" id="2.7.1.6"/>
    </reaction>
</comment>
<comment type="pathway">
    <text evidence="1">Carbohydrate metabolism; galactose metabolism.</text>
</comment>
<comment type="subcellular location">
    <subcellularLocation>
        <location evidence="1">Cytoplasm</location>
    </subcellularLocation>
</comment>
<comment type="similarity">
    <text evidence="1">Belongs to the GHMP kinase family. GalK subfamily.</text>
</comment>
<name>GAL1_SHIBS</name>
<dbReference type="EC" id="2.7.1.6" evidence="1"/>
<dbReference type="EMBL" id="CP000036">
    <property type="protein sequence ID" value="ABB65296.1"/>
    <property type="molecule type" value="Genomic_DNA"/>
</dbReference>
<dbReference type="RefSeq" id="WP_000053435.1">
    <property type="nucleotide sequence ID" value="NC_007613.1"/>
</dbReference>
<dbReference type="SMR" id="Q324G2"/>
<dbReference type="KEGG" id="sbo:SBO_0612"/>
<dbReference type="HOGENOM" id="CLU_017814_2_1_6"/>
<dbReference type="UniPathway" id="UPA00214"/>
<dbReference type="Proteomes" id="UP000007067">
    <property type="component" value="Chromosome"/>
</dbReference>
<dbReference type="GO" id="GO:0005829">
    <property type="term" value="C:cytosol"/>
    <property type="evidence" value="ECO:0007669"/>
    <property type="project" value="TreeGrafter"/>
</dbReference>
<dbReference type="GO" id="GO:0005524">
    <property type="term" value="F:ATP binding"/>
    <property type="evidence" value="ECO:0007669"/>
    <property type="project" value="UniProtKB-UniRule"/>
</dbReference>
<dbReference type="GO" id="GO:0004335">
    <property type="term" value="F:galactokinase activity"/>
    <property type="evidence" value="ECO:0007669"/>
    <property type="project" value="UniProtKB-UniRule"/>
</dbReference>
<dbReference type="GO" id="GO:0000287">
    <property type="term" value="F:magnesium ion binding"/>
    <property type="evidence" value="ECO:0007669"/>
    <property type="project" value="UniProtKB-UniRule"/>
</dbReference>
<dbReference type="GO" id="GO:0006012">
    <property type="term" value="P:galactose metabolic process"/>
    <property type="evidence" value="ECO:0007669"/>
    <property type="project" value="UniProtKB-UniRule"/>
</dbReference>
<dbReference type="FunFam" id="3.30.230.10:FF:000017">
    <property type="entry name" value="Galactokinase"/>
    <property type="match status" value="1"/>
</dbReference>
<dbReference type="FunFam" id="3.30.70.890:FF:000001">
    <property type="entry name" value="Galactokinase"/>
    <property type="match status" value="1"/>
</dbReference>
<dbReference type="Gene3D" id="3.30.230.10">
    <property type="match status" value="1"/>
</dbReference>
<dbReference type="Gene3D" id="3.30.70.890">
    <property type="entry name" value="GHMP kinase, C-terminal domain"/>
    <property type="match status" value="1"/>
</dbReference>
<dbReference type="HAMAP" id="MF_00246">
    <property type="entry name" value="Galactokinase"/>
    <property type="match status" value="1"/>
</dbReference>
<dbReference type="InterPro" id="IPR000705">
    <property type="entry name" value="Galactokinase"/>
</dbReference>
<dbReference type="InterPro" id="IPR022963">
    <property type="entry name" value="Galactokinase_bac"/>
</dbReference>
<dbReference type="InterPro" id="IPR019741">
    <property type="entry name" value="Galactokinase_CS"/>
</dbReference>
<dbReference type="InterPro" id="IPR019539">
    <property type="entry name" value="GalKase_N"/>
</dbReference>
<dbReference type="InterPro" id="IPR013750">
    <property type="entry name" value="GHMP_kinase_C_dom"/>
</dbReference>
<dbReference type="InterPro" id="IPR036554">
    <property type="entry name" value="GHMP_kinase_C_sf"/>
</dbReference>
<dbReference type="InterPro" id="IPR006204">
    <property type="entry name" value="GHMP_kinase_N_dom"/>
</dbReference>
<dbReference type="InterPro" id="IPR006203">
    <property type="entry name" value="GHMP_knse_ATP-bd_CS"/>
</dbReference>
<dbReference type="InterPro" id="IPR006206">
    <property type="entry name" value="Mevalonate/galactokinase"/>
</dbReference>
<dbReference type="InterPro" id="IPR020568">
    <property type="entry name" value="Ribosomal_Su5_D2-typ_SF"/>
</dbReference>
<dbReference type="InterPro" id="IPR014721">
    <property type="entry name" value="Ribsml_uS5_D2-typ_fold_subgr"/>
</dbReference>
<dbReference type="NCBIfam" id="TIGR00131">
    <property type="entry name" value="gal_kin"/>
    <property type="match status" value="1"/>
</dbReference>
<dbReference type="NCBIfam" id="NF003472">
    <property type="entry name" value="PRK05101.1"/>
    <property type="match status" value="1"/>
</dbReference>
<dbReference type="PANTHER" id="PTHR10457:SF7">
    <property type="entry name" value="GALACTOKINASE-RELATED"/>
    <property type="match status" value="1"/>
</dbReference>
<dbReference type="PANTHER" id="PTHR10457">
    <property type="entry name" value="MEVALONATE KINASE/GALACTOKINASE"/>
    <property type="match status" value="1"/>
</dbReference>
<dbReference type="Pfam" id="PF10509">
    <property type="entry name" value="GalKase_gal_bdg"/>
    <property type="match status" value="1"/>
</dbReference>
<dbReference type="Pfam" id="PF08544">
    <property type="entry name" value="GHMP_kinases_C"/>
    <property type="match status" value="1"/>
</dbReference>
<dbReference type="Pfam" id="PF00288">
    <property type="entry name" value="GHMP_kinases_N"/>
    <property type="match status" value="1"/>
</dbReference>
<dbReference type="PIRSF" id="PIRSF000530">
    <property type="entry name" value="Galactokinase"/>
    <property type="match status" value="1"/>
</dbReference>
<dbReference type="PRINTS" id="PR00473">
    <property type="entry name" value="GALCTOKINASE"/>
</dbReference>
<dbReference type="PRINTS" id="PR00959">
    <property type="entry name" value="MEVGALKINASE"/>
</dbReference>
<dbReference type="SUPFAM" id="SSF55060">
    <property type="entry name" value="GHMP Kinase, C-terminal domain"/>
    <property type="match status" value="1"/>
</dbReference>
<dbReference type="SUPFAM" id="SSF54211">
    <property type="entry name" value="Ribosomal protein S5 domain 2-like"/>
    <property type="match status" value="1"/>
</dbReference>
<dbReference type="PROSITE" id="PS00106">
    <property type="entry name" value="GALACTOKINASE"/>
    <property type="match status" value="1"/>
</dbReference>
<dbReference type="PROSITE" id="PS00627">
    <property type="entry name" value="GHMP_KINASES_ATP"/>
    <property type="match status" value="1"/>
</dbReference>